<name>DCNL3_BOVIN</name>
<gene>
    <name evidence="1" type="primary">DCUN1D3</name>
</gene>
<sequence>MGQCVTKCKNPSSTLGSKNGDRDPSSKSHGRRSASHREEQLPTCGKPGGDILVNGTKKAEAAPEACQLPTSSGDAGREPKSNAEESSLQRLEELFRRYKDEREDAILEEGMERFCNDLCVDPTEFRVLLLAWKFQAATMCKFTRKEFFDGCKAISADSIDGICARFPSLLTEAKQEDKFKDLYRFTFQFGLDSEEGQRSLHREIAIALWKLVFTQNNPPVLDQWLNFLTENPSGIKGISRDTWNMFLNFTQVIGPDLSNYSEDEAWPSLFDTFVEWEMERRKREGEGRGALSSGPEGLCPEEQT</sequence>
<protein>
    <recommendedName>
        <fullName evidence="1">DCN1-like protein 3</fullName>
        <shortName evidence="1">DCNL3</shortName>
    </recommendedName>
    <alternativeName>
        <fullName>DCUN1 domain-containing protein 3</fullName>
    </alternativeName>
    <alternativeName>
        <fullName>Defective in cullin neddylation protein 1-like protein 3</fullName>
    </alternativeName>
</protein>
<feature type="initiator methionine" description="Removed">
    <location>
        <position position="1"/>
    </location>
</feature>
<feature type="chain" id="PRO_0000320047" description="DCN1-like protein 3">
    <location>
        <begin position="2"/>
        <end position="304"/>
    </location>
</feature>
<feature type="domain" description="DCUN1" evidence="3">
    <location>
        <begin position="86"/>
        <end position="278"/>
    </location>
</feature>
<feature type="region of interest" description="Disordered" evidence="4">
    <location>
        <begin position="1"/>
        <end position="87"/>
    </location>
</feature>
<feature type="region of interest" description="Disordered" evidence="4">
    <location>
        <begin position="284"/>
        <end position="304"/>
    </location>
</feature>
<feature type="lipid moiety-binding region" description="N-myristoyl glycine" evidence="1 2">
    <location>
        <position position="2"/>
    </location>
</feature>
<proteinExistence type="evidence at transcript level"/>
<organism>
    <name type="scientific">Bos taurus</name>
    <name type="common">Bovine</name>
    <dbReference type="NCBI Taxonomy" id="9913"/>
    <lineage>
        <taxon>Eukaryota</taxon>
        <taxon>Metazoa</taxon>
        <taxon>Chordata</taxon>
        <taxon>Craniata</taxon>
        <taxon>Vertebrata</taxon>
        <taxon>Euteleostomi</taxon>
        <taxon>Mammalia</taxon>
        <taxon>Eutheria</taxon>
        <taxon>Laurasiatheria</taxon>
        <taxon>Artiodactyla</taxon>
        <taxon>Ruminantia</taxon>
        <taxon>Pecora</taxon>
        <taxon>Bovidae</taxon>
        <taxon>Bovinae</taxon>
        <taxon>Bos</taxon>
    </lineage>
</organism>
<evidence type="ECO:0000250" key="1">
    <source>
        <dbReference type="UniProtKB" id="Q8IWE4"/>
    </source>
</evidence>
<evidence type="ECO:0000255" key="2"/>
<evidence type="ECO:0000255" key="3">
    <source>
        <dbReference type="PROSITE-ProRule" id="PRU00574"/>
    </source>
</evidence>
<evidence type="ECO:0000256" key="4">
    <source>
        <dbReference type="SAM" id="MobiDB-lite"/>
    </source>
</evidence>
<reference key="1">
    <citation type="journal article" date="2005" name="BMC Genomics">
        <title>Characterization of 954 bovine full-CDS cDNA sequences.</title>
        <authorList>
            <person name="Harhay G.P."/>
            <person name="Sonstegard T.S."/>
            <person name="Keele J.W."/>
            <person name="Heaton M.P."/>
            <person name="Clawson M.L."/>
            <person name="Snelling W.M."/>
            <person name="Wiedmann R.T."/>
            <person name="Van Tassell C.P."/>
            <person name="Smith T.P.L."/>
        </authorList>
    </citation>
    <scope>NUCLEOTIDE SEQUENCE [LARGE SCALE MRNA]</scope>
</reference>
<comment type="function">
    <text evidence="1">Contributes to the neddylation of all cullins by transferring NEDD8 from N-terminally acetylated NEDD8-conjugating E2s enzyme to different cullin C-terminal domain-RBX complexes and may play a role in the cell cycle progression by regulating the SCF ubiquitin E3 ligase complex, after UV damage. At the cell membrane, can promote and as well inhibit cullins neddylation.</text>
</comment>
<comment type="subunit">
    <text evidence="1">Part of a complex containing DCUN1D3, CUL3 and RBX1. Interacts (via the DCUN1 domain) with the unneddylated cullins: interacts with CUL1, CUL2, CUL3, CUL4A, CUL4B and CUL5; these interactions promote the cullin neddylation and the identity of the cullin dictates the affinity of the interaction. Interacts preferentially with CUL3; this interaction triggers the relocalization of CUL3 to the cell membrane where CUL3 is neddylated. Interacts (via DCUN1 domain) with RBX1. May also interact with regulators or subunits of cullin-RING ligases such as RNF7, ELOB and DDB1; these interactions are bridged by cullins. Interacts (via DCUN1 domain) with CAND1; this interaction is bridged by cullins and strongly inhibits cullin neddylation. These CAND-cullin-DCNL complexes can only be neddylated in the presence of a substrate adapter. Interacts (via DCUN1 domain) with the N-terminally acetylated form of UBE2M and UBE2F.</text>
</comment>
<comment type="subcellular location">
    <subcellularLocation>
        <location evidence="1">Cell membrane</location>
    </subcellularLocation>
    <subcellularLocation>
        <location evidence="1">Cytoplasm</location>
    </subcellularLocation>
    <subcellularLocation>
        <location evidence="1">Nucleus</location>
    </subcellularLocation>
    <subcellularLocation>
        <location evidence="1">Cytoplasm</location>
        <location evidence="1">Perinuclear region</location>
    </subcellularLocation>
    <text evidence="1">After UVC treatment, the protein enters to the nucleus gradually. Cell membrane localization is essential for CUL3 neddylation.</text>
</comment>
<comment type="domain">
    <text evidence="1">The DCUN1 domain, also known as PONY domain, mediates the interaction with different cullins. The DCUN1 domain mediates the interaction with the N-terminally acetylated NEDD8-conjugating E2s enzyme leading to the NEDD8 transfer from N-terminally acetylated NEDD8-conjugating E2s enzyme to different cullin C-terminal domain-RBX complexes; the neddylation efficiency correlates with the DCUN1D5-cullin and DCUN1D5-E2 interaction affinities. This domain is also involved in CAND1-, cullins- and RBX1-binding.</text>
</comment>
<dbReference type="EMBL" id="BT020819">
    <property type="protein sequence ID" value="AAX08836.1"/>
    <property type="molecule type" value="mRNA"/>
</dbReference>
<dbReference type="RefSeq" id="NP_001015518.1">
    <property type="nucleotide sequence ID" value="NM_001015518.1"/>
</dbReference>
<dbReference type="RefSeq" id="XP_005224760.1">
    <property type="nucleotide sequence ID" value="XM_005224703.5"/>
</dbReference>
<dbReference type="RefSeq" id="XP_005224761.1">
    <property type="nucleotide sequence ID" value="XM_005224704.5"/>
</dbReference>
<dbReference type="RefSeq" id="XP_005224765.1">
    <property type="nucleotide sequence ID" value="XM_005224708.5"/>
</dbReference>
<dbReference type="RefSeq" id="XP_010817585.1">
    <property type="nucleotide sequence ID" value="XM_010819283.2"/>
</dbReference>
<dbReference type="RefSeq" id="XP_015315801.1">
    <property type="nucleotide sequence ID" value="XM_015460315.1"/>
</dbReference>
<dbReference type="RefSeq" id="XP_015315802.1">
    <property type="nucleotide sequence ID" value="XM_015460316.1"/>
</dbReference>
<dbReference type="RefSeq" id="XP_024840458.1">
    <property type="nucleotide sequence ID" value="XM_024984690.2"/>
</dbReference>
<dbReference type="RefSeq" id="XP_059737160.1">
    <property type="nucleotide sequence ID" value="XM_059881177.1"/>
</dbReference>
<dbReference type="RefSeq" id="XP_059737161.1">
    <property type="nucleotide sequence ID" value="XM_059881178.1"/>
</dbReference>
<dbReference type="RefSeq" id="XP_059737162.1">
    <property type="nucleotide sequence ID" value="XM_059881179.1"/>
</dbReference>
<dbReference type="RefSeq" id="XP_059737163.1">
    <property type="nucleotide sequence ID" value="XM_059881180.1"/>
</dbReference>
<dbReference type="RefSeq" id="XP_059737164.1">
    <property type="nucleotide sequence ID" value="XM_059881181.1"/>
</dbReference>
<dbReference type="RefSeq" id="XP_059737165.1">
    <property type="nucleotide sequence ID" value="XM_059881182.1"/>
</dbReference>
<dbReference type="SMR" id="Q5E9V1"/>
<dbReference type="FunCoup" id="Q5E9V1">
    <property type="interactions" value="1302"/>
</dbReference>
<dbReference type="STRING" id="9913.ENSBTAP00000043119"/>
<dbReference type="PaxDb" id="9913-ENSBTAP00000043119"/>
<dbReference type="Ensembl" id="ENSBTAT00000045756.3">
    <property type="protein sequence ID" value="ENSBTAP00000043119.2"/>
    <property type="gene ID" value="ENSBTAG00000032260.4"/>
</dbReference>
<dbReference type="GeneID" id="504926"/>
<dbReference type="KEGG" id="bta:504926"/>
<dbReference type="CTD" id="123879"/>
<dbReference type="VEuPathDB" id="HostDB:ENSBTAG00000032260"/>
<dbReference type="VGNC" id="VGNC:27937">
    <property type="gene designation" value="DCUN1D3"/>
</dbReference>
<dbReference type="eggNOG" id="KOG3077">
    <property type="taxonomic scope" value="Eukaryota"/>
</dbReference>
<dbReference type="GeneTree" id="ENSGT00940000154944"/>
<dbReference type="HOGENOM" id="CLU_047042_2_0_1"/>
<dbReference type="InParanoid" id="Q5E9V1"/>
<dbReference type="OMA" id="DQMNQNI"/>
<dbReference type="OrthoDB" id="27198at2759"/>
<dbReference type="TreeFam" id="TF313332"/>
<dbReference type="Reactome" id="R-BTA-8951664">
    <property type="pathway name" value="Neddylation"/>
</dbReference>
<dbReference type="Proteomes" id="UP000009136">
    <property type="component" value="Chromosome 25"/>
</dbReference>
<dbReference type="Bgee" id="ENSBTAG00000032260">
    <property type="expression patterns" value="Expressed in spermatid and 107 other cell types or tissues"/>
</dbReference>
<dbReference type="GO" id="GO:0005737">
    <property type="term" value="C:cytoplasm"/>
    <property type="evidence" value="ECO:0000250"/>
    <property type="project" value="UniProtKB"/>
</dbReference>
<dbReference type="GO" id="GO:0005829">
    <property type="term" value="C:cytosol"/>
    <property type="evidence" value="ECO:0007669"/>
    <property type="project" value="Ensembl"/>
</dbReference>
<dbReference type="GO" id="GO:0005654">
    <property type="term" value="C:nucleoplasm"/>
    <property type="evidence" value="ECO:0007669"/>
    <property type="project" value="Ensembl"/>
</dbReference>
<dbReference type="GO" id="GO:0005634">
    <property type="term" value="C:nucleus"/>
    <property type="evidence" value="ECO:0000250"/>
    <property type="project" value="UniProtKB"/>
</dbReference>
<dbReference type="GO" id="GO:0048471">
    <property type="term" value="C:perinuclear region of cytoplasm"/>
    <property type="evidence" value="ECO:0000250"/>
    <property type="project" value="UniProtKB"/>
</dbReference>
<dbReference type="GO" id="GO:0005886">
    <property type="term" value="C:plasma membrane"/>
    <property type="evidence" value="ECO:0000250"/>
    <property type="project" value="UniProtKB"/>
</dbReference>
<dbReference type="GO" id="GO:0000151">
    <property type="term" value="C:ubiquitin ligase complex"/>
    <property type="evidence" value="ECO:0000318"/>
    <property type="project" value="GO_Central"/>
</dbReference>
<dbReference type="GO" id="GO:0097602">
    <property type="term" value="F:cullin family protein binding"/>
    <property type="evidence" value="ECO:0000250"/>
    <property type="project" value="UniProtKB"/>
</dbReference>
<dbReference type="GO" id="GO:0031624">
    <property type="term" value="F:ubiquitin conjugating enzyme binding"/>
    <property type="evidence" value="ECO:0000318"/>
    <property type="project" value="GO_Central"/>
</dbReference>
<dbReference type="GO" id="GO:0032182">
    <property type="term" value="F:ubiquitin-like protein binding"/>
    <property type="evidence" value="ECO:0000318"/>
    <property type="project" value="GO_Central"/>
</dbReference>
<dbReference type="GO" id="GO:0030308">
    <property type="term" value="P:negative regulation of cell growth"/>
    <property type="evidence" value="ECO:0000250"/>
    <property type="project" value="UniProtKB"/>
</dbReference>
<dbReference type="GO" id="GO:2000134">
    <property type="term" value="P:negative regulation of G1/S transition of mitotic cell cycle"/>
    <property type="evidence" value="ECO:0000250"/>
    <property type="project" value="UniProtKB"/>
</dbReference>
<dbReference type="GO" id="GO:2000435">
    <property type="term" value="P:negative regulation of protein neddylation"/>
    <property type="evidence" value="ECO:0000250"/>
    <property type="project" value="UniProtKB"/>
</dbReference>
<dbReference type="GO" id="GO:0043065">
    <property type="term" value="P:positive regulation of apoptotic process"/>
    <property type="evidence" value="ECO:0000250"/>
    <property type="project" value="UniProtKB"/>
</dbReference>
<dbReference type="GO" id="GO:2000436">
    <property type="term" value="P:positive regulation of protein neddylation"/>
    <property type="evidence" value="ECO:0000250"/>
    <property type="project" value="UniProtKB"/>
</dbReference>
<dbReference type="GO" id="GO:0045116">
    <property type="term" value="P:protein neddylation"/>
    <property type="evidence" value="ECO:0000318"/>
    <property type="project" value="GO_Central"/>
</dbReference>
<dbReference type="GO" id="GO:0010564">
    <property type="term" value="P:regulation of cell cycle process"/>
    <property type="evidence" value="ECO:0000250"/>
    <property type="project" value="UniProtKB"/>
</dbReference>
<dbReference type="GO" id="GO:2000434">
    <property type="term" value="P:regulation of protein neddylation"/>
    <property type="evidence" value="ECO:0000250"/>
    <property type="project" value="UniProtKB"/>
</dbReference>
<dbReference type="GO" id="GO:0010332">
    <property type="term" value="P:response to gamma radiation"/>
    <property type="evidence" value="ECO:0000250"/>
    <property type="project" value="UniProtKB"/>
</dbReference>
<dbReference type="GO" id="GO:0010225">
    <property type="term" value="P:response to UV-C"/>
    <property type="evidence" value="ECO:0000250"/>
    <property type="project" value="UniProtKB"/>
</dbReference>
<dbReference type="FunFam" id="1.10.238.10:FF:000126">
    <property type="entry name" value="DCN1-like protein"/>
    <property type="match status" value="1"/>
</dbReference>
<dbReference type="FunFam" id="1.10.238.200:FF:000003">
    <property type="entry name" value="DCN1-like protein 3"/>
    <property type="match status" value="1"/>
</dbReference>
<dbReference type="Gene3D" id="1.10.238.200">
    <property type="entry name" value="Cullin, PONY binding domain"/>
    <property type="match status" value="1"/>
</dbReference>
<dbReference type="Gene3D" id="1.10.238.10">
    <property type="entry name" value="EF-hand"/>
    <property type="match status" value="1"/>
</dbReference>
<dbReference type="InterPro" id="IPR014764">
    <property type="entry name" value="DCN-prot"/>
</dbReference>
<dbReference type="InterPro" id="IPR042460">
    <property type="entry name" value="DCN1-like_PONY"/>
</dbReference>
<dbReference type="InterPro" id="IPR005176">
    <property type="entry name" value="PONY_dom"/>
</dbReference>
<dbReference type="PANTHER" id="PTHR12281:SF31">
    <property type="entry name" value="DCN1-LIKE PROTEIN 3"/>
    <property type="match status" value="1"/>
</dbReference>
<dbReference type="PANTHER" id="PTHR12281">
    <property type="entry name" value="RP42 RELATED"/>
    <property type="match status" value="1"/>
</dbReference>
<dbReference type="Pfam" id="PF03556">
    <property type="entry name" value="Cullin_binding"/>
    <property type="match status" value="1"/>
</dbReference>
<dbReference type="PROSITE" id="PS51229">
    <property type="entry name" value="DCUN1"/>
    <property type="match status" value="1"/>
</dbReference>
<keyword id="KW-1003">Cell membrane</keyword>
<keyword id="KW-0963">Cytoplasm</keyword>
<keyword id="KW-0449">Lipoprotein</keyword>
<keyword id="KW-0472">Membrane</keyword>
<keyword id="KW-0519">Myristate</keyword>
<keyword id="KW-0539">Nucleus</keyword>
<keyword id="KW-1185">Reference proteome</keyword>
<accession>Q5E9V1</accession>